<keyword id="KW-0012">Acyltransferase</keyword>
<keyword id="KW-0963">Cytoplasm</keyword>
<keyword id="KW-0808">Transferase</keyword>
<organism>
    <name type="scientific">Mycobacterium sp. (strain KMS)</name>
    <dbReference type="NCBI Taxonomy" id="189918"/>
    <lineage>
        <taxon>Bacteria</taxon>
        <taxon>Bacillati</taxon>
        <taxon>Actinomycetota</taxon>
        <taxon>Actinomycetes</taxon>
        <taxon>Mycobacteriales</taxon>
        <taxon>Mycobacteriaceae</taxon>
        <taxon>Mycobacterium</taxon>
    </lineage>
</organism>
<reference key="1">
    <citation type="submission" date="2006-12" db="EMBL/GenBank/DDBJ databases">
        <title>Complete sequence of chromosome of Mycobacterium sp. KMS.</title>
        <authorList>
            <consortium name="US DOE Joint Genome Institute"/>
            <person name="Copeland A."/>
            <person name="Lucas S."/>
            <person name="Lapidus A."/>
            <person name="Barry K."/>
            <person name="Detter J.C."/>
            <person name="Glavina del Rio T."/>
            <person name="Hammon N."/>
            <person name="Israni S."/>
            <person name="Dalin E."/>
            <person name="Tice H."/>
            <person name="Pitluck S."/>
            <person name="Kiss H."/>
            <person name="Brettin T."/>
            <person name="Bruce D."/>
            <person name="Han C."/>
            <person name="Tapia R."/>
            <person name="Gilna P."/>
            <person name="Schmutz J."/>
            <person name="Larimer F."/>
            <person name="Land M."/>
            <person name="Hauser L."/>
            <person name="Kyrpides N."/>
            <person name="Mikhailova N."/>
            <person name="Miller C.D."/>
            <person name="Richardson P."/>
        </authorList>
    </citation>
    <scope>NUCLEOTIDE SEQUENCE [LARGE SCALE GENOMIC DNA]</scope>
    <source>
        <strain>KMS</strain>
    </source>
</reference>
<protein>
    <recommendedName>
        <fullName evidence="1">Octanoyltransferase</fullName>
        <ecNumber evidence="1">2.3.1.181</ecNumber>
    </recommendedName>
    <alternativeName>
        <fullName evidence="1">Lipoate-protein ligase B</fullName>
    </alternativeName>
    <alternativeName>
        <fullName evidence="1">Lipoyl/octanoyl transferase</fullName>
    </alternativeName>
    <alternativeName>
        <fullName evidence="1">Octanoyl-[acyl-carrier-protein]-protein N-octanoyltransferase</fullName>
    </alternativeName>
</protein>
<dbReference type="EC" id="2.3.1.181" evidence="1"/>
<dbReference type="EMBL" id="CP000518">
    <property type="protein sequence ID" value="ABL92571.1"/>
    <property type="molecule type" value="Genomic_DNA"/>
</dbReference>
<dbReference type="SMR" id="A1UIB3"/>
<dbReference type="STRING" id="189918.Mkms_3377"/>
<dbReference type="KEGG" id="mkm:Mkms_3377"/>
<dbReference type="HOGENOM" id="CLU_035168_2_1_11"/>
<dbReference type="UniPathway" id="UPA00538">
    <property type="reaction ID" value="UER00592"/>
</dbReference>
<dbReference type="GO" id="GO:0005737">
    <property type="term" value="C:cytoplasm"/>
    <property type="evidence" value="ECO:0007669"/>
    <property type="project" value="UniProtKB-SubCell"/>
</dbReference>
<dbReference type="GO" id="GO:0033819">
    <property type="term" value="F:lipoyl(octanoyl) transferase activity"/>
    <property type="evidence" value="ECO:0007669"/>
    <property type="project" value="UniProtKB-EC"/>
</dbReference>
<dbReference type="GO" id="GO:0036211">
    <property type="term" value="P:protein modification process"/>
    <property type="evidence" value="ECO:0007669"/>
    <property type="project" value="InterPro"/>
</dbReference>
<dbReference type="CDD" id="cd16444">
    <property type="entry name" value="LipB"/>
    <property type="match status" value="1"/>
</dbReference>
<dbReference type="FunFam" id="3.30.930.10:FF:000035">
    <property type="entry name" value="Putative lipoyltransferase 2, mitochondrial"/>
    <property type="match status" value="1"/>
</dbReference>
<dbReference type="Gene3D" id="3.30.930.10">
    <property type="entry name" value="Bira Bifunctional Protein, Domain 2"/>
    <property type="match status" value="1"/>
</dbReference>
<dbReference type="HAMAP" id="MF_00013">
    <property type="entry name" value="LipB"/>
    <property type="match status" value="1"/>
</dbReference>
<dbReference type="InterPro" id="IPR045864">
    <property type="entry name" value="aa-tRNA-synth_II/BPL/LPL"/>
</dbReference>
<dbReference type="InterPro" id="IPR004143">
    <property type="entry name" value="BPL_LPL_catalytic"/>
</dbReference>
<dbReference type="InterPro" id="IPR000544">
    <property type="entry name" value="Octanoyltransferase"/>
</dbReference>
<dbReference type="InterPro" id="IPR020605">
    <property type="entry name" value="Octanoyltransferase_CS"/>
</dbReference>
<dbReference type="NCBIfam" id="TIGR00214">
    <property type="entry name" value="lipB"/>
    <property type="match status" value="1"/>
</dbReference>
<dbReference type="NCBIfam" id="NF010925">
    <property type="entry name" value="PRK14345.1"/>
    <property type="match status" value="1"/>
</dbReference>
<dbReference type="PANTHER" id="PTHR10993:SF7">
    <property type="entry name" value="LIPOYLTRANSFERASE 2, MITOCHONDRIAL-RELATED"/>
    <property type="match status" value="1"/>
</dbReference>
<dbReference type="PANTHER" id="PTHR10993">
    <property type="entry name" value="OCTANOYLTRANSFERASE"/>
    <property type="match status" value="1"/>
</dbReference>
<dbReference type="Pfam" id="PF21948">
    <property type="entry name" value="LplA-B_cat"/>
    <property type="match status" value="1"/>
</dbReference>
<dbReference type="PIRSF" id="PIRSF016262">
    <property type="entry name" value="LPLase"/>
    <property type="match status" value="1"/>
</dbReference>
<dbReference type="SUPFAM" id="SSF55681">
    <property type="entry name" value="Class II aaRS and biotin synthetases"/>
    <property type="match status" value="1"/>
</dbReference>
<dbReference type="PROSITE" id="PS51733">
    <property type="entry name" value="BPL_LPL_CATALYTIC"/>
    <property type="match status" value="1"/>
</dbReference>
<dbReference type="PROSITE" id="PS01313">
    <property type="entry name" value="LIPB"/>
    <property type="match status" value="1"/>
</dbReference>
<proteinExistence type="inferred from homology"/>
<comment type="function">
    <text evidence="1">Catalyzes the transfer of endogenously produced octanoic acid from octanoyl-acyl-carrier-protein onto the lipoyl domains of lipoate-dependent enzymes. Lipoyl-ACP can also act as a substrate although octanoyl-ACP is likely to be the physiological substrate.</text>
</comment>
<comment type="catalytic activity">
    <reaction evidence="1">
        <text>octanoyl-[ACP] + L-lysyl-[protein] = N(6)-octanoyl-L-lysyl-[protein] + holo-[ACP] + H(+)</text>
        <dbReference type="Rhea" id="RHEA:17665"/>
        <dbReference type="Rhea" id="RHEA-COMP:9636"/>
        <dbReference type="Rhea" id="RHEA-COMP:9685"/>
        <dbReference type="Rhea" id="RHEA-COMP:9752"/>
        <dbReference type="Rhea" id="RHEA-COMP:9928"/>
        <dbReference type="ChEBI" id="CHEBI:15378"/>
        <dbReference type="ChEBI" id="CHEBI:29969"/>
        <dbReference type="ChEBI" id="CHEBI:64479"/>
        <dbReference type="ChEBI" id="CHEBI:78463"/>
        <dbReference type="ChEBI" id="CHEBI:78809"/>
        <dbReference type="EC" id="2.3.1.181"/>
    </reaction>
</comment>
<comment type="pathway">
    <text evidence="1">Protein modification; protein lipoylation via endogenous pathway; protein N(6)-(lipoyl)lysine from octanoyl-[acyl-carrier-protein]: step 1/2.</text>
</comment>
<comment type="subcellular location">
    <subcellularLocation>
        <location evidence="1">Cytoplasm</location>
    </subcellularLocation>
</comment>
<comment type="miscellaneous">
    <text evidence="1">In the reaction, the free carboxyl group of octanoic acid is attached via an amide linkage to the epsilon-amino group of a specific lysine residue of lipoyl domains of lipoate-dependent enzymes.</text>
</comment>
<comment type="similarity">
    <text evidence="1">Belongs to the LipB family.</text>
</comment>
<evidence type="ECO:0000255" key="1">
    <source>
        <dbReference type="HAMAP-Rule" id="MF_00013"/>
    </source>
</evidence>
<evidence type="ECO:0000255" key="2">
    <source>
        <dbReference type="PROSITE-ProRule" id="PRU01067"/>
    </source>
</evidence>
<name>LIPB_MYCSK</name>
<sequence>MSMAISIRSSTRPVEVRRLGTVEYLDAWELQRGLVDARVAGGSDALLLLQHPSVYTAGKRTEPHERPADGTPVVDTDRGGKITWHGPGQLVGYPIVGLAEPLDVVNFVRRIEEALIAVCTGLGLDAGRVEGRSGVWLPGDGLRPERKIGAIGIRVSRGTTLHGFALNCDCDLSAFSAIVPCGIADAGVTSLTAELGRRVTVDEVTDAVAARVCDALDGRLAVSGVSVDTYASGVASTQ</sequence>
<gene>
    <name evidence="1" type="primary">lipB</name>
    <name type="ordered locus">Mkms_3377</name>
</gene>
<accession>A1UIB3</accession>
<feature type="chain" id="PRO_0000321649" description="Octanoyltransferase">
    <location>
        <begin position="1"/>
        <end position="238"/>
    </location>
</feature>
<feature type="domain" description="BPL/LPL catalytic" evidence="2">
    <location>
        <begin position="40"/>
        <end position="220"/>
    </location>
</feature>
<feature type="active site" description="Acyl-thioester intermediate" evidence="1">
    <location>
        <position position="181"/>
    </location>
</feature>
<feature type="binding site" evidence="1">
    <location>
        <begin position="78"/>
        <end position="85"/>
    </location>
    <ligand>
        <name>substrate</name>
    </ligand>
</feature>
<feature type="binding site" evidence="1">
    <location>
        <begin position="150"/>
        <end position="152"/>
    </location>
    <ligand>
        <name>substrate</name>
    </ligand>
</feature>
<feature type="binding site" evidence="1">
    <location>
        <begin position="163"/>
        <end position="165"/>
    </location>
    <ligand>
        <name>substrate</name>
    </ligand>
</feature>
<feature type="site" description="Lowers pKa of active site Cys" evidence="1">
    <location>
        <position position="147"/>
    </location>
</feature>